<proteinExistence type="inferred from homology"/>
<name>RDGC_SHELP</name>
<dbReference type="EMBL" id="CP000606">
    <property type="protein sequence ID" value="ABO24617.1"/>
    <property type="molecule type" value="Genomic_DNA"/>
</dbReference>
<dbReference type="RefSeq" id="WP_011866548.1">
    <property type="nucleotide sequence ID" value="NC_009092.1"/>
</dbReference>
<dbReference type="SMR" id="A3QGL9"/>
<dbReference type="STRING" id="323850.Shew_2751"/>
<dbReference type="KEGG" id="slo:Shew_2751"/>
<dbReference type="eggNOG" id="COG2974">
    <property type="taxonomic scope" value="Bacteria"/>
</dbReference>
<dbReference type="HOGENOM" id="CLU_052038_1_1_6"/>
<dbReference type="OrthoDB" id="5290530at2"/>
<dbReference type="Proteomes" id="UP000001558">
    <property type="component" value="Chromosome"/>
</dbReference>
<dbReference type="GO" id="GO:0043590">
    <property type="term" value="C:bacterial nucleoid"/>
    <property type="evidence" value="ECO:0007669"/>
    <property type="project" value="TreeGrafter"/>
</dbReference>
<dbReference type="GO" id="GO:0005737">
    <property type="term" value="C:cytoplasm"/>
    <property type="evidence" value="ECO:0007669"/>
    <property type="project" value="UniProtKB-UniRule"/>
</dbReference>
<dbReference type="GO" id="GO:0003690">
    <property type="term" value="F:double-stranded DNA binding"/>
    <property type="evidence" value="ECO:0007669"/>
    <property type="project" value="TreeGrafter"/>
</dbReference>
<dbReference type="GO" id="GO:0006310">
    <property type="term" value="P:DNA recombination"/>
    <property type="evidence" value="ECO:0007669"/>
    <property type="project" value="UniProtKB-UniRule"/>
</dbReference>
<dbReference type="GO" id="GO:0000018">
    <property type="term" value="P:regulation of DNA recombination"/>
    <property type="evidence" value="ECO:0007669"/>
    <property type="project" value="TreeGrafter"/>
</dbReference>
<dbReference type="HAMAP" id="MF_00194">
    <property type="entry name" value="RdgC"/>
    <property type="match status" value="1"/>
</dbReference>
<dbReference type="InterPro" id="IPR007476">
    <property type="entry name" value="RdgC"/>
</dbReference>
<dbReference type="NCBIfam" id="NF001462">
    <property type="entry name" value="PRK00321.1-3"/>
    <property type="match status" value="1"/>
</dbReference>
<dbReference type="NCBIfam" id="NF001464">
    <property type="entry name" value="PRK00321.1-5"/>
    <property type="match status" value="1"/>
</dbReference>
<dbReference type="PANTHER" id="PTHR38103">
    <property type="entry name" value="RECOMBINATION-ASSOCIATED PROTEIN RDGC"/>
    <property type="match status" value="1"/>
</dbReference>
<dbReference type="PANTHER" id="PTHR38103:SF1">
    <property type="entry name" value="RECOMBINATION-ASSOCIATED PROTEIN RDGC"/>
    <property type="match status" value="1"/>
</dbReference>
<dbReference type="Pfam" id="PF04381">
    <property type="entry name" value="RdgC"/>
    <property type="match status" value="1"/>
</dbReference>
<comment type="function">
    <text evidence="1">May be involved in recombination.</text>
</comment>
<comment type="subcellular location">
    <subcellularLocation>
        <location evidence="1">Cytoplasm</location>
        <location evidence="1">Nucleoid</location>
    </subcellularLocation>
</comment>
<comment type="similarity">
    <text evidence="1">Belongs to the RdgC family.</text>
</comment>
<evidence type="ECO:0000255" key="1">
    <source>
        <dbReference type="HAMAP-Rule" id="MF_00194"/>
    </source>
</evidence>
<accession>A3QGL9</accession>
<gene>
    <name evidence="1" type="primary">rdgC</name>
    <name type="ordered locus">Shew_2751</name>
</gene>
<sequence length="303" mass="33821">MWFKNLTVYRFNKPFSVDTEALEKSLEDFTFSPCSSQDISKFGFSKALGKLGHTLVHSAENRHLICATKEEKILPSQVVKEALEEKVAQIEAEENRKLAKKEKDALKEEITTTLLPRAFSRRSQIHALILPEIEMILVDSSSATKAEELLALLRKALGSLPVIPMSFKTPIEAQLTEWLKSNSAPAPFEMQDEAELKSDSDEGGIVRFKQQDLTENEVLAHLEVGKQVHKLALHFGQSIAFVLQSDAGIKRLKFSEEFRAHNDEVSTEDPLARLDADFALMGSELIALMNSLVEVLGGLEDSL</sequence>
<feature type="chain" id="PRO_1000021232" description="Recombination-associated protein RdgC">
    <location>
        <begin position="1"/>
        <end position="303"/>
    </location>
</feature>
<organism>
    <name type="scientific">Shewanella loihica (strain ATCC BAA-1088 / PV-4)</name>
    <dbReference type="NCBI Taxonomy" id="323850"/>
    <lineage>
        <taxon>Bacteria</taxon>
        <taxon>Pseudomonadati</taxon>
        <taxon>Pseudomonadota</taxon>
        <taxon>Gammaproteobacteria</taxon>
        <taxon>Alteromonadales</taxon>
        <taxon>Shewanellaceae</taxon>
        <taxon>Shewanella</taxon>
    </lineage>
</organism>
<keyword id="KW-0963">Cytoplasm</keyword>
<keyword id="KW-0233">DNA recombination</keyword>
<keyword id="KW-1185">Reference proteome</keyword>
<reference key="1">
    <citation type="submission" date="2007-03" db="EMBL/GenBank/DDBJ databases">
        <title>Complete sequence of Shewanella loihica PV-4.</title>
        <authorList>
            <consortium name="US DOE Joint Genome Institute"/>
            <person name="Copeland A."/>
            <person name="Lucas S."/>
            <person name="Lapidus A."/>
            <person name="Barry K."/>
            <person name="Detter J.C."/>
            <person name="Glavina del Rio T."/>
            <person name="Hammon N."/>
            <person name="Israni S."/>
            <person name="Dalin E."/>
            <person name="Tice H."/>
            <person name="Pitluck S."/>
            <person name="Chain P."/>
            <person name="Malfatti S."/>
            <person name="Shin M."/>
            <person name="Vergez L."/>
            <person name="Schmutz J."/>
            <person name="Larimer F."/>
            <person name="Land M."/>
            <person name="Hauser L."/>
            <person name="Kyrpides N."/>
            <person name="Mikhailova N."/>
            <person name="Romine M.F."/>
            <person name="Serres G."/>
            <person name="Fredrickson J."/>
            <person name="Tiedje J."/>
            <person name="Richardson P."/>
        </authorList>
    </citation>
    <scope>NUCLEOTIDE SEQUENCE [LARGE SCALE GENOMIC DNA]</scope>
    <source>
        <strain>ATCC BAA-1088 / PV-4</strain>
    </source>
</reference>
<protein>
    <recommendedName>
        <fullName evidence="1">Recombination-associated protein RdgC</fullName>
    </recommendedName>
</protein>